<proteinExistence type="inferred from homology"/>
<accession>Q7MWG1</accession>
<comment type="similarity">
    <text evidence="1">Belongs to the bacterial ribosomal protein bL34 family.</text>
</comment>
<gene>
    <name evidence="1" type="primary">rpmH</name>
    <name type="ordered locus">PG_0656</name>
</gene>
<organism>
    <name type="scientific">Porphyromonas gingivalis (strain ATCC BAA-308 / W83)</name>
    <dbReference type="NCBI Taxonomy" id="242619"/>
    <lineage>
        <taxon>Bacteria</taxon>
        <taxon>Pseudomonadati</taxon>
        <taxon>Bacteroidota</taxon>
        <taxon>Bacteroidia</taxon>
        <taxon>Bacteroidales</taxon>
        <taxon>Porphyromonadaceae</taxon>
        <taxon>Porphyromonas</taxon>
    </lineage>
</organism>
<protein>
    <recommendedName>
        <fullName evidence="1">Large ribosomal subunit protein bL34</fullName>
    </recommendedName>
    <alternativeName>
        <fullName evidence="2">50S ribosomal protein L34</fullName>
    </alternativeName>
</protein>
<feature type="chain" id="PRO_0000187435" description="Large ribosomal subunit protein bL34">
    <location>
        <begin position="1"/>
        <end position="50"/>
    </location>
</feature>
<sequence>MKRTYQPSNRKRLNKHGFRSRMATANGRRVLAARRAKGRAKLTVSDEFVG</sequence>
<evidence type="ECO:0000255" key="1">
    <source>
        <dbReference type="HAMAP-Rule" id="MF_00391"/>
    </source>
</evidence>
<evidence type="ECO:0000305" key="2"/>
<dbReference type="EMBL" id="AE015924">
    <property type="protein sequence ID" value="AAQ65835.1"/>
    <property type="molecule type" value="Genomic_DNA"/>
</dbReference>
<dbReference type="RefSeq" id="WP_004585205.1">
    <property type="nucleotide sequence ID" value="NC_002950.2"/>
</dbReference>
<dbReference type="SMR" id="Q7MWG1"/>
<dbReference type="STRING" id="242619.PG_0656"/>
<dbReference type="EnsemblBacteria" id="AAQ65835">
    <property type="protein sequence ID" value="AAQ65835"/>
    <property type="gene ID" value="PG_0656"/>
</dbReference>
<dbReference type="GeneID" id="29255918"/>
<dbReference type="GeneID" id="57239247"/>
<dbReference type="KEGG" id="pgi:PG_0656"/>
<dbReference type="eggNOG" id="COG0230">
    <property type="taxonomic scope" value="Bacteria"/>
</dbReference>
<dbReference type="HOGENOM" id="CLU_129938_2_0_10"/>
<dbReference type="Proteomes" id="UP000000588">
    <property type="component" value="Chromosome"/>
</dbReference>
<dbReference type="GO" id="GO:1990904">
    <property type="term" value="C:ribonucleoprotein complex"/>
    <property type="evidence" value="ECO:0007669"/>
    <property type="project" value="UniProtKB-KW"/>
</dbReference>
<dbReference type="GO" id="GO:0005840">
    <property type="term" value="C:ribosome"/>
    <property type="evidence" value="ECO:0007669"/>
    <property type="project" value="UniProtKB-KW"/>
</dbReference>
<dbReference type="GO" id="GO:0003735">
    <property type="term" value="F:structural constituent of ribosome"/>
    <property type="evidence" value="ECO:0007669"/>
    <property type="project" value="InterPro"/>
</dbReference>
<dbReference type="GO" id="GO:0006412">
    <property type="term" value="P:translation"/>
    <property type="evidence" value="ECO:0007669"/>
    <property type="project" value="UniProtKB-UniRule"/>
</dbReference>
<dbReference type="FunFam" id="1.10.287.3980:FF:000001">
    <property type="entry name" value="Mitochondrial ribosomal protein L34"/>
    <property type="match status" value="1"/>
</dbReference>
<dbReference type="Gene3D" id="1.10.287.3980">
    <property type="match status" value="1"/>
</dbReference>
<dbReference type="HAMAP" id="MF_00391">
    <property type="entry name" value="Ribosomal_bL34"/>
    <property type="match status" value="1"/>
</dbReference>
<dbReference type="InterPro" id="IPR000271">
    <property type="entry name" value="Ribosomal_bL34"/>
</dbReference>
<dbReference type="InterPro" id="IPR020939">
    <property type="entry name" value="Ribosomal_bL34_CS"/>
</dbReference>
<dbReference type="NCBIfam" id="TIGR01030">
    <property type="entry name" value="rpmH_bact"/>
    <property type="match status" value="1"/>
</dbReference>
<dbReference type="PANTHER" id="PTHR14503:SF4">
    <property type="entry name" value="LARGE RIBOSOMAL SUBUNIT PROTEIN BL34M"/>
    <property type="match status" value="1"/>
</dbReference>
<dbReference type="PANTHER" id="PTHR14503">
    <property type="entry name" value="MITOCHONDRIAL RIBOSOMAL PROTEIN 34 FAMILY MEMBER"/>
    <property type="match status" value="1"/>
</dbReference>
<dbReference type="Pfam" id="PF00468">
    <property type="entry name" value="Ribosomal_L34"/>
    <property type="match status" value="1"/>
</dbReference>
<dbReference type="PROSITE" id="PS00784">
    <property type="entry name" value="RIBOSOMAL_L34"/>
    <property type="match status" value="1"/>
</dbReference>
<reference key="1">
    <citation type="journal article" date="2003" name="J. Bacteriol.">
        <title>Complete genome sequence of the oral pathogenic bacterium Porphyromonas gingivalis strain W83.</title>
        <authorList>
            <person name="Nelson K.E."/>
            <person name="Fleischmann R.D."/>
            <person name="DeBoy R.T."/>
            <person name="Paulsen I.T."/>
            <person name="Fouts D.E."/>
            <person name="Eisen J.A."/>
            <person name="Daugherty S.C."/>
            <person name="Dodson R.J."/>
            <person name="Durkin A.S."/>
            <person name="Gwinn M.L."/>
            <person name="Haft D.H."/>
            <person name="Kolonay J.F."/>
            <person name="Nelson W.C."/>
            <person name="Mason T.M."/>
            <person name="Tallon L."/>
            <person name="Gray J."/>
            <person name="Granger D."/>
            <person name="Tettelin H."/>
            <person name="Dong H."/>
            <person name="Galvin J.L."/>
            <person name="Duncan M.J."/>
            <person name="Dewhirst F.E."/>
            <person name="Fraser C.M."/>
        </authorList>
    </citation>
    <scope>NUCLEOTIDE SEQUENCE [LARGE SCALE GENOMIC DNA]</scope>
    <source>
        <strain>ATCC BAA-308 / W83</strain>
    </source>
</reference>
<keyword id="KW-1185">Reference proteome</keyword>
<keyword id="KW-0687">Ribonucleoprotein</keyword>
<keyword id="KW-0689">Ribosomal protein</keyword>
<name>RL34_PORGI</name>